<sequence length="1460" mass="158255">MYNPYQQQGMGYQQQQQQQQQQPNGFYPQQQQGQSSNQPQGQPQPQQQMAFNQPQATGIGGMPQSFGNSFSTMPQQPQTGYNNNGNNGSVYGNGNFGQQPQQQQQQVKPQHTGYVPNSSMPMMNTTGTMPPPNPAQQPQLQSIQPQGTGYYQSANTANVHSVQPLQSQGTGYYVSTPNLISSNQTQQPLQAQGTGYYQSQPQQVPPPQQAQSLQPLKPQQTGFYLQPQNQAPLEPLKPTATGFVNSFANNGLNNDIKIPAIRLSFITAQDQAKFETLFRSIVTNGSNTVSGANCRKILMRSGLPPSQLARIWTLCDTSKAGELLFPEFALAMHLINDVLQGDTIPYELDSKTKNEVSSFIDAINLSIANQDSSANDAPKTPFDEFITAGVQNLQPQPTGYMPQTSFGIPLQSQITGGGVASALNPQSTGFMAPTTFNMSMNTGTPGLNPQITGGAPASMQPNITGNALQPQTTGMMPQTTGMMPQTSFGVNLGPQLTGGALQSQYTGGYGSVMPQQSGPASMPNLSFNQQGLQSQLTGLQPQPTGFLPPSNFSATMPLTAQKTGFGNNEIYTKSNFGNNLIDNSSQDKISTEEKSLFYKFLKLLILKTKVVRFPHCCGNFRKSGLNRADLEQIWNLCDINNTGQLNKQEFALGMHLVYGKLNGKPIPNVLPSSLIPSSTKLLDNLKNQLKTEPTTTKEKPSFGKIDALSYKNNDDDVLPNYRNRRKVYSAKNEEQSSFSSPSAKSVNHSSSTLQTDDISVDKTVEKKTAKPKYSGFSREINLKNIASLENEIKNISNPENCYDNSIPSDLTSRFDAIIAKLPNLFNEISTIDNEITNAKIQLYRKKNPSSIIGSGPNGEITENDRKKAKSRALLRARMSALTGKSTESEDSLSMEDEQQSAEIKRIQQENGKNQEIIKDIRSSISDISASLKSTMTGSNMISNQEFERWEFGIGLEDGVREFLDDLKSNSNKSVTESSPFVPSSTPTPVDDRSSSPSYSQFKTAEERAAYLKEQAKKRMKEKLAKFDKNRRNVTQSSRSISSENSREQPQQIAGSSNLVEPRATPFQEEKYVEVAQPTQPVQSTQPVQPTQPVQPTQPVQPTQPVQNVYNAKQESDDEDEDDEEKRLQEELKRLKLKKKADKEKRLAALRKQIEDAQNESDEEETNGKDNFGGHVNVPQAAPVAPSAAFSQNSTNAPRSVHAAVTPAAGKNSTGLPSTTMGHNPYFKDASASSTSTFDARAAEMQRRIQRGLDEDEDDGWSDEDESNNRVAVDNKVEEAKIGHPDHARAPPVTAAPLPSVTPVPPAVPVPQANTSNEKSSPIPIAPIPPSVTQEPPVPLAPPLPAVDGFQEPPIPSAPAIATAVQKSGSSTPALAGGVLPPPPPLPTQQASTSEPIIAHVDNYNGAEKGTGAYGSDSDDDVLSIPESVGTDEEEEGAQPVSTAGIPSIPPAGIPPPPPLP</sequence>
<protein>
    <recommendedName>
        <fullName>Actin cytoskeleton-regulatory complex protein PAN1</fullName>
    </recommendedName>
    <alternativeName>
        <fullName>Mitochondrial distribution of proteins protein 3</fullName>
    </alternativeName>
</protein>
<proteinExistence type="inferred from homology"/>
<dbReference type="EMBL" id="AAFW02000124">
    <property type="protein sequence ID" value="EDN61499.1"/>
    <property type="status" value="ALT_FRAME"/>
    <property type="molecule type" value="Genomic_DNA"/>
</dbReference>
<dbReference type="EMBL" id="AAFW02000124">
    <property type="protein sequence ID" value="EDN61500.1"/>
    <property type="status" value="ALT_SEQ"/>
    <property type="molecule type" value="Genomic_DNA"/>
</dbReference>
<dbReference type="SMR" id="A6ZVS5"/>
<dbReference type="HOGENOM" id="CLU_349229_0_0_1"/>
<dbReference type="OrthoDB" id="7860at4893"/>
<dbReference type="Proteomes" id="UP000007060">
    <property type="component" value="Unassembled WGS sequence"/>
</dbReference>
<dbReference type="GO" id="GO:0030479">
    <property type="term" value="C:actin cortical patch"/>
    <property type="evidence" value="ECO:0007669"/>
    <property type="project" value="UniProtKB-SubCell"/>
</dbReference>
<dbReference type="GO" id="GO:0010008">
    <property type="term" value="C:endosome membrane"/>
    <property type="evidence" value="ECO:0007669"/>
    <property type="project" value="UniProtKB-SubCell"/>
</dbReference>
<dbReference type="GO" id="GO:0005886">
    <property type="term" value="C:plasma membrane"/>
    <property type="evidence" value="ECO:0007669"/>
    <property type="project" value="UniProtKB-SubCell"/>
</dbReference>
<dbReference type="GO" id="GO:0003779">
    <property type="term" value="F:actin binding"/>
    <property type="evidence" value="ECO:0007669"/>
    <property type="project" value="UniProtKB-KW"/>
</dbReference>
<dbReference type="GO" id="GO:0005509">
    <property type="term" value="F:calcium ion binding"/>
    <property type="evidence" value="ECO:0007669"/>
    <property type="project" value="InterPro"/>
</dbReference>
<dbReference type="GO" id="GO:0006897">
    <property type="term" value="P:endocytosis"/>
    <property type="evidence" value="ECO:0007669"/>
    <property type="project" value="UniProtKB-KW"/>
</dbReference>
<dbReference type="GO" id="GO:0016197">
    <property type="term" value="P:endosomal transport"/>
    <property type="evidence" value="ECO:0007669"/>
    <property type="project" value="TreeGrafter"/>
</dbReference>
<dbReference type="CDD" id="cd00052">
    <property type="entry name" value="EH"/>
    <property type="match status" value="2"/>
</dbReference>
<dbReference type="FunFam" id="1.10.238.10:FF:000349">
    <property type="entry name" value="Actin cytoskeleton-regulatory complex protein PAN1"/>
    <property type="match status" value="1"/>
</dbReference>
<dbReference type="Gene3D" id="1.10.238.10">
    <property type="entry name" value="EF-hand"/>
    <property type="match status" value="2"/>
</dbReference>
<dbReference type="InterPro" id="IPR013182">
    <property type="entry name" value="DUF1720"/>
</dbReference>
<dbReference type="InterPro" id="IPR011992">
    <property type="entry name" value="EF-hand-dom_pair"/>
</dbReference>
<dbReference type="InterPro" id="IPR018247">
    <property type="entry name" value="EF_Hand_1_Ca_BS"/>
</dbReference>
<dbReference type="InterPro" id="IPR002048">
    <property type="entry name" value="EF_hand_dom"/>
</dbReference>
<dbReference type="InterPro" id="IPR000261">
    <property type="entry name" value="EH_dom"/>
</dbReference>
<dbReference type="PANTHER" id="PTHR11216:SF173">
    <property type="entry name" value="ACTIN CYTOSKELETON-REGULATORY COMPLEX PROTEIN PAN1"/>
    <property type="match status" value="1"/>
</dbReference>
<dbReference type="PANTHER" id="PTHR11216">
    <property type="entry name" value="EH DOMAIN"/>
    <property type="match status" value="1"/>
</dbReference>
<dbReference type="Pfam" id="PF08226">
    <property type="entry name" value="DUF1720"/>
    <property type="match status" value="3"/>
</dbReference>
<dbReference type="Pfam" id="PF12763">
    <property type="entry name" value="EH"/>
    <property type="match status" value="2"/>
</dbReference>
<dbReference type="SMART" id="SM00054">
    <property type="entry name" value="EFh"/>
    <property type="match status" value="2"/>
</dbReference>
<dbReference type="SMART" id="SM00027">
    <property type="entry name" value="EH"/>
    <property type="match status" value="2"/>
</dbReference>
<dbReference type="SUPFAM" id="SSF47473">
    <property type="entry name" value="EF-hand"/>
    <property type="match status" value="2"/>
</dbReference>
<dbReference type="PROSITE" id="PS50222">
    <property type="entry name" value="EF_HAND_2"/>
    <property type="match status" value="3"/>
</dbReference>
<dbReference type="PROSITE" id="PS50031">
    <property type="entry name" value="EH"/>
    <property type="match status" value="2"/>
</dbReference>
<comment type="function">
    <text evidence="2">Component of the PAN1 actin cytoskeleton-regulatory complex required for the internalization of endosomes during actin-coupled endocytosis. The complex links the site of endocytosis to the cell membrane-associated actin cytoskeleton. Mediates uptake of external molecules and vacuolar degradation of plasma membrane proteins. Plays a role in the proper organization of the cell membrane-associated actin cytoskeleton and promotes its destabilization (By similarity).</text>
</comment>
<comment type="subunit">
    <text evidence="2">Component of the PAN1 actin cytoskeleton-regulatory complex.</text>
</comment>
<comment type="subcellular location">
    <subcellularLocation>
        <location evidence="1">Cell membrane</location>
        <topology evidence="1">Peripheral membrane protein</topology>
        <orientation evidence="1">Cytoplasmic side</orientation>
    </subcellularLocation>
    <subcellularLocation>
        <location evidence="1">Endosome membrane</location>
        <topology evidence="1">Peripheral membrane protein</topology>
        <orientation evidence="1">Cytoplasmic side</orientation>
    </subcellularLocation>
    <subcellularLocation>
        <location evidence="1">Cytoplasm</location>
        <location evidence="1">Cytoskeleton</location>
        <location evidence="1">Actin patch</location>
    </subcellularLocation>
    <text evidence="1">Cytoplasmic and cortical actin patches.</text>
</comment>
<comment type="PTM">
    <text evidence="2">Phosphorylated by PRK1 on threonine residues in the L-x-x-Q-x-T-G motif of repeats 1-6 to 1-15 (By similarity). Phosphorylated by ARK1 (By similarity).</text>
</comment>
<comment type="similarity">
    <text evidence="7">Belongs to the PAN1 family.</text>
</comment>
<comment type="sequence caution" evidence="7">
    <conflict type="frameshift">
        <sequence resource="EMBL-CDS" id="EDN61499"/>
    </conflict>
</comment>
<comment type="sequence caution" evidence="7">
    <conflict type="erroneous initiation">
        <sequence resource="EMBL-CDS" id="EDN61500"/>
    </conflict>
    <text>Truncated N-terminus.</text>
</comment>
<comment type="sequence caution" evidence="7">
    <conflict type="frameshift">
        <sequence resource="EMBL-CDS" id="EDN61500"/>
    </conflict>
</comment>
<accession>A6ZVS5</accession>
<accession>A6ZVS4</accession>
<keyword id="KW-0009">Actin-binding</keyword>
<keyword id="KW-0106">Calcium</keyword>
<keyword id="KW-1003">Cell membrane</keyword>
<keyword id="KW-0175">Coiled coil</keyword>
<keyword id="KW-0963">Cytoplasm</keyword>
<keyword id="KW-0206">Cytoskeleton</keyword>
<keyword id="KW-0254">Endocytosis</keyword>
<keyword id="KW-0967">Endosome</keyword>
<keyword id="KW-0472">Membrane</keyword>
<keyword id="KW-0479">Metal-binding</keyword>
<keyword id="KW-0597">Phosphoprotein</keyword>
<keyword id="KW-0677">Repeat</keyword>
<organism>
    <name type="scientific">Saccharomyces cerevisiae (strain YJM789)</name>
    <name type="common">Baker's yeast</name>
    <dbReference type="NCBI Taxonomy" id="307796"/>
    <lineage>
        <taxon>Eukaryota</taxon>
        <taxon>Fungi</taxon>
        <taxon>Dikarya</taxon>
        <taxon>Ascomycota</taxon>
        <taxon>Saccharomycotina</taxon>
        <taxon>Saccharomycetes</taxon>
        <taxon>Saccharomycetales</taxon>
        <taxon>Saccharomycetaceae</taxon>
        <taxon>Saccharomyces</taxon>
    </lineage>
</organism>
<feature type="chain" id="PRO_0000349488" description="Actin cytoskeleton-regulatory complex protein PAN1">
    <location>
        <begin position="1"/>
        <end position="1460"/>
    </location>
</feature>
<feature type="repeat" description="1-1">
    <location>
        <begin position="142"/>
        <end position="153"/>
    </location>
</feature>
<feature type="repeat" description="1-2">
    <location>
        <begin position="164"/>
        <end position="175"/>
    </location>
</feature>
<feature type="repeat" description="1-3">
    <location>
        <begin position="188"/>
        <end position="199"/>
    </location>
</feature>
<feature type="repeat" description="1-4">
    <location>
        <begin position="215"/>
        <end position="226"/>
    </location>
</feature>
<feature type="repeat" description="1-5">
    <location>
        <begin position="235"/>
        <end position="246"/>
    </location>
</feature>
<feature type="domain" description="EF-hand 1" evidence="5">
    <location>
        <begin position="269"/>
        <end position="304"/>
    </location>
</feature>
<feature type="domain" description="EH 1" evidence="4">
    <location>
        <begin position="270"/>
        <end position="359"/>
    </location>
</feature>
<feature type="domain" description="EF-hand 2" evidence="5">
    <location>
        <begin position="306"/>
        <end position="338"/>
    </location>
</feature>
<feature type="repeat" description="2-1">
    <location>
        <begin position="328"/>
        <end position="350"/>
    </location>
</feature>
<feature type="repeat" description="1-6">
    <location>
        <begin position="392"/>
        <end position="403"/>
    </location>
</feature>
<feature type="repeat" description="1-7">
    <location>
        <begin position="409"/>
        <end position="420"/>
    </location>
</feature>
<feature type="repeat" description="1-8">
    <location>
        <begin position="422"/>
        <end position="433"/>
    </location>
</feature>
<feature type="repeat" description="1-9">
    <location>
        <begin position="446"/>
        <end position="457"/>
    </location>
</feature>
<feature type="repeat" description="1-10">
    <location>
        <begin position="467"/>
        <end position="478"/>
    </location>
</feature>
<feature type="repeat" description="1-11">
    <location>
        <begin position="491"/>
        <end position="502"/>
    </location>
</feature>
<feature type="repeat" description="1-12">
    <location>
        <begin position="503"/>
        <end position="511"/>
    </location>
</feature>
<feature type="repeat" description="1-13">
    <location>
        <begin position="531"/>
        <end position="541"/>
    </location>
</feature>
<feature type="repeat" description="1-14">
    <location>
        <begin position="542"/>
        <end position="549"/>
    </location>
</feature>
<feature type="repeat" description="1-15">
    <location>
        <begin position="557"/>
        <end position="568"/>
    </location>
</feature>
<feature type="domain" description="EH 2" evidence="4">
    <location>
        <begin position="593"/>
        <end position="681"/>
    </location>
</feature>
<feature type="domain" description="EF-hand 3" evidence="5">
    <location>
        <begin position="625"/>
        <end position="660"/>
    </location>
</feature>
<feature type="repeat" description="2-2">
    <location>
        <begin position="650"/>
        <end position="672"/>
    </location>
</feature>
<feature type="repeat" description="3-1">
    <location>
        <begin position="1076"/>
        <end position="1081"/>
    </location>
</feature>
<feature type="repeat" description="3-2">
    <location>
        <begin position="1082"/>
        <end position="1087"/>
    </location>
</feature>
<feature type="repeat" description="3-3">
    <location>
        <begin position="1088"/>
        <end position="1093"/>
    </location>
</feature>
<feature type="repeat" description="3-4">
    <location>
        <begin position="1094"/>
        <end position="1099"/>
    </location>
</feature>
<feature type="repeat" description="3-5">
    <location>
        <begin position="1100"/>
        <end position="1105"/>
    </location>
</feature>
<feature type="repeat" description="4-1">
    <location>
        <begin position="1295"/>
        <end position="1300"/>
    </location>
</feature>
<feature type="repeat" description="4-2">
    <location>
        <begin position="1301"/>
        <end position="1306"/>
    </location>
</feature>
<feature type="repeat" description="4-3">
    <location>
        <begin position="1307"/>
        <end position="1312"/>
    </location>
</feature>
<feature type="repeat" description="4-4">
    <location>
        <begin position="1320"/>
        <end position="1325"/>
    </location>
</feature>
<feature type="repeat" description="4-5">
    <location>
        <begin position="1326"/>
        <end position="1330"/>
    </location>
</feature>
<feature type="repeat" description="4-6">
    <location>
        <begin position="1335"/>
        <end position="1340"/>
    </location>
</feature>
<feature type="repeat" description="4-7">
    <location>
        <begin position="1341"/>
        <end position="1346"/>
    </location>
</feature>
<feature type="repeat" description="4-8">
    <location>
        <begin position="1352"/>
        <end position="1357"/>
    </location>
</feature>
<feature type="region of interest" description="Disordered" evidence="6">
    <location>
        <begin position="1"/>
        <end position="151"/>
    </location>
</feature>
<feature type="region of interest" description="15 X 12 AA tandem repeats of [SPNAG]-[IL]-[QKNGT]-[PSA]-[QT]-[GQAPISTLYK]-T-G-[YFGML]-[YVMGAQL]-[QVLNPAG]-[ASQPN]">
    <location>
        <begin position="142"/>
        <end position="568"/>
    </location>
</feature>
<feature type="region of interest" description="Disordered" evidence="6">
    <location>
        <begin position="185"/>
        <end position="214"/>
    </location>
</feature>
<feature type="region of interest" description="2 X 23 AA repeats of F-A-L-[AG]-M-H-L-[IV]-[NY]-[DG]-[VK]-L-[QN]-G-[DK]-[TP]-I-P-[YN]-[EV]-L-[DP]-S">
    <location>
        <begin position="328"/>
        <end position="672"/>
    </location>
</feature>
<feature type="region of interest" description="Disordered" evidence="6">
    <location>
        <begin position="729"/>
        <end position="758"/>
    </location>
</feature>
<feature type="region of interest" description="Disordered" evidence="6">
    <location>
        <begin position="880"/>
        <end position="901"/>
    </location>
</feature>
<feature type="region of interest" description="Disordered" evidence="6">
    <location>
        <begin position="969"/>
        <end position="1127"/>
    </location>
</feature>
<feature type="region of interest" description="5 X 6 AA tandem repeats of Q-[PS]-T-Q-P-V">
    <location>
        <begin position="1076"/>
        <end position="1105"/>
    </location>
</feature>
<feature type="region of interest" description="Disordered" evidence="6">
    <location>
        <begin position="1149"/>
        <end position="1460"/>
    </location>
</feature>
<feature type="region of interest" description="8 X 6 AA repeats of [ATVSP]-P-[LVI]-P-[SPQILA]-[VAS]">
    <location>
        <begin position="1295"/>
        <end position="1357"/>
    </location>
</feature>
<feature type="coiled-coil region" evidence="3">
    <location>
        <begin position="1111"/>
        <end position="1170"/>
    </location>
</feature>
<feature type="compositionally biased region" description="Low complexity" evidence="6">
    <location>
        <begin position="1"/>
        <end position="56"/>
    </location>
</feature>
<feature type="compositionally biased region" description="Polar residues" evidence="6">
    <location>
        <begin position="65"/>
        <end position="79"/>
    </location>
</feature>
<feature type="compositionally biased region" description="Low complexity" evidence="6">
    <location>
        <begin position="80"/>
        <end position="110"/>
    </location>
</feature>
<feature type="compositionally biased region" description="Low complexity" evidence="6">
    <location>
        <begin position="117"/>
        <end position="128"/>
    </location>
</feature>
<feature type="compositionally biased region" description="Low complexity" evidence="6">
    <location>
        <begin position="136"/>
        <end position="146"/>
    </location>
</feature>
<feature type="compositionally biased region" description="Polar residues" evidence="6">
    <location>
        <begin position="185"/>
        <end position="197"/>
    </location>
</feature>
<feature type="compositionally biased region" description="Polar residues" evidence="6">
    <location>
        <begin position="735"/>
        <end position="757"/>
    </location>
</feature>
<feature type="compositionally biased region" description="Acidic residues" evidence="6">
    <location>
        <begin position="888"/>
        <end position="899"/>
    </location>
</feature>
<feature type="compositionally biased region" description="Low complexity" evidence="6">
    <location>
        <begin position="973"/>
        <end position="988"/>
    </location>
</feature>
<feature type="compositionally biased region" description="Basic and acidic residues" evidence="6">
    <location>
        <begin position="1003"/>
        <end position="1030"/>
    </location>
</feature>
<feature type="compositionally biased region" description="Polar residues" evidence="6">
    <location>
        <begin position="1048"/>
        <end position="1058"/>
    </location>
</feature>
<feature type="compositionally biased region" description="Low complexity" evidence="6">
    <location>
        <begin position="1076"/>
        <end position="1106"/>
    </location>
</feature>
<feature type="compositionally biased region" description="Low complexity" evidence="6">
    <location>
        <begin position="1175"/>
        <end position="1188"/>
    </location>
</feature>
<feature type="compositionally biased region" description="Polar residues" evidence="6">
    <location>
        <begin position="1210"/>
        <end position="1221"/>
    </location>
</feature>
<feature type="compositionally biased region" description="Low complexity" evidence="6">
    <location>
        <begin position="1228"/>
        <end position="1239"/>
    </location>
</feature>
<feature type="compositionally biased region" description="Basic and acidic residues" evidence="6">
    <location>
        <begin position="1240"/>
        <end position="1252"/>
    </location>
</feature>
<feature type="compositionally biased region" description="Acidic residues" evidence="6">
    <location>
        <begin position="1253"/>
        <end position="1265"/>
    </location>
</feature>
<feature type="compositionally biased region" description="Basic and acidic residues" evidence="6">
    <location>
        <begin position="1272"/>
        <end position="1288"/>
    </location>
</feature>
<feature type="compositionally biased region" description="Low complexity" evidence="6">
    <location>
        <begin position="1289"/>
        <end position="1298"/>
    </location>
</feature>
<feature type="compositionally biased region" description="Pro residues" evidence="6">
    <location>
        <begin position="1299"/>
        <end position="1308"/>
    </location>
</feature>
<feature type="compositionally biased region" description="Pro residues" evidence="6">
    <location>
        <begin position="1323"/>
        <end position="1344"/>
    </location>
</feature>
<feature type="compositionally biased region" description="Pro residues" evidence="6">
    <location>
        <begin position="1447"/>
        <end position="1460"/>
    </location>
</feature>
<feature type="binding site" evidence="5">
    <location>
        <position position="638"/>
    </location>
    <ligand>
        <name>Ca(2+)</name>
        <dbReference type="ChEBI" id="CHEBI:29108"/>
    </ligand>
</feature>
<feature type="binding site" evidence="5">
    <location>
        <position position="640"/>
    </location>
    <ligand>
        <name>Ca(2+)</name>
        <dbReference type="ChEBI" id="CHEBI:29108"/>
    </ligand>
</feature>
<feature type="binding site" evidence="5">
    <location>
        <position position="642"/>
    </location>
    <ligand>
        <name>Ca(2+)</name>
        <dbReference type="ChEBI" id="CHEBI:29108"/>
    </ligand>
</feature>
<feature type="binding site" evidence="5">
    <location>
        <position position="644"/>
    </location>
    <ligand>
        <name>Ca(2+)</name>
        <dbReference type="ChEBI" id="CHEBI:29108"/>
    </ligand>
</feature>
<feature type="binding site" evidence="5">
    <location>
        <position position="649"/>
    </location>
    <ligand>
        <name>Ca(2+)</name>
        <dbReference type="ChEBI" id="CHEBI:29108"/>
    </ligand>
</feature>
<feature type="modified residue" description="Phosphothreonine" evidence="2">
    <location>
        <position position="241"/>
    </location>
</feature>
<feature type="modified residue" description="Phosphothreonine" evidence="2">
    <location>
        <position position="563"/>
    </location>
</feature>
<feature type="modified residue" description="Phosphoserine" evidence="2">
    <location>
        <position position="739"/>
    </location>
</feature>
<feature type="modified residue" description="Phosphoserine" evidence="2">
    <location>
        <position position="749"/>
    </location>
</feature>
<feature type="modified residue" description="Phosphothreonine" evidence="2">
    <location>
        <position position="985"/>
    </location>
</feature>
<feature type="modified residue" description="Phosphothreonine" evidence="2">
    <location>
        <position position="987"/>
    </location>
</feature>
<feature type="modified residue" description="Phosphoserine" evidence="2">
    <location>
        <position position="995"/>
    </location>
</feature>
<feature type="modified residue" description="Phosphoserine" evidence="2">
    <location>
        <position position="1160"/>
    </location>
</feature>
<feature type="modified residue" description="Phosphoserine" evidence="2">
    <location>
        <position position="1230"/>
    </location>
</feature>
<feature type="modified residue" description="Phosphoserine" evidence="2">
    <location>
        <position position="1233"/>
    </location>
</feature>
<feature type="modified residue" description="Phosphoserine" evidence="2">
    <location>
        <position position="1261"/>
    </location>
</feature>
<feature type="modified residue" description="Phosphothreonine" evidence="2">
    <location>
        <position position="1301"/>
    </location>
</feature>
<name>PAN1_YEAS7</name>
<evidence type="ECO:0000250" key="1"/>
<evidence type="ECO:0000250" key="2">
    <source>
        <dbReference type="UniProtKB" id="P32521"/>
    </source>
</evidence>
<evidence type="ECO:0000255" key="3"/>
<evidence type="ECO:0000255" key="4">
    <source>
        <dbReference type="PROSITE-ProRule" id="PRU00077"/>
    </source>
</evidence>
<evidence type="ECO:0000255" key="5">
    <source>
        <dbReference type="PROSITE-ProRule" id="PRU00448"/>
    </source>
</evidence>
<evidence type="ECO:0000256" key="6">
    <source>
        <dbReference type="SAM" id="MobiDB-lite"/>
    </source>
</evidence>
<evidence type="ECO:0000305" key="7"/>
<gene>
    <name type="primary">PAN1</name>
    <name type="synonym">DIM2</name>
    <name type="synonym">MDP3</name>
    <name type="synonym">MIP3</name>
    <name type="ORF">SCY_2791</name>
</gene>
<reference key="1">
    <citation type="journal article" date="2007" name="Proc. Natl. Acad. Sci. U.S.A.">
        <title>Genome sequencing and comparative analysis of Saccharomyces cerevisiae strain YJM789.</title>
        <authorList>
            <person name="Wei W."/>
            <person name="McCusker J.H."/>
            <person name="Hyman R.W."/>
            <person name="Jones T."/>
            <person name="Ning Y."/>
            <person name="Cao Z."/>
            <person name="Gu Z."/>
            <person name="Bruno D."/>
            <person name="Miranda M."/>
            <person name="Nguyen M."/>
            <person name="Wilhelmy J."/>
            <person name="Komp C."/>
            <person name="Tamse R."/>
            <person name="Wang X."/>
            <person name="Jia P."/>
            <person name="Luedi P."/>
            <person name="Oefner P.J."/>
            <person name="David L."/>
            <person name="Dietrich F.S."/>
            <person name="Li Y."/>
            <person name="Davis R.W."/>
            <person name="Steinmetz L.M."/>
        </authorList>
    </citation>
    <scope>NUCLEOTIDE SEQUENCE [LARGE SCALE GENOMIC DNA]</scope>
    <source>
        <strain>YJM789</strain>
    </source>
</reference>